<dbReference type="EC" id="6.3.2.6" evidence="1"/>
<dbReference type="EMBL" id="CP000090">
    <property type="protein sequence ID" value="AAZ59938.1"/>
    <property type="molecule type" value="Genomic_DNA"/>
</dbReference>
<dbReference type="SMR" id="Q475J5"/>
<dbReference type="STRING" id="264198.Reut_A0556"/>
<dbReference type="KEGG" id="reu:Reut_A0556"/>
<dbReference type="eggNOG" id="COG0152">
    <property type="taxonomic scope" value="Bacteria"/>
</dbReference>
<dbReference type="HOGENOM" id="CLU_045637_0_0_4"/>
<dbReference type="OrthoDB" id="9801549at2"/>
<dbReference type="UniPathway" id="UPA00074">
    <property type="reaction ID" value="UER00131"/>
</dbReference>
<dbReference type="GO" id="GO:0005737">
    <property type="term" value="C:cytoplasm"/>
    <property type="evidence" value="ECO:0007669"/>
    <property type="project" value="TreeGrafter"/>
</dbReference>
<dbReference type="GO" id="GO:0005524">
    <property type="term" value="F:ATP binding"/>
    <property type="evidence" value="ECO:0007669"/>
    <property type="project" value="UniProtKB-KW"/>
</dbReference>
<dbReference type="GO" id="GO:0004639">
    <property type="term" value="F:phosphoribosylaminoimidazolesuccinocarboxamide synthase activity"/>
    <property type="evidence" value="ECO:0007669"/>
    <property type="project" value="UniProtKB-UniRule"/>
</dbReference>
<dbReference type="GO" id="GO:0006189">
    <property type="term" value="P:'de novo' IMP biosynthetic process"/>
    <property type="evidence" value="ECO:0007669"/>
    <property type="project" value="UniProtKB-UniRule"/>
</dbReference>
<dbReference type="CDD" id="cd01414">
    <property type="entry name" value="SAICAR_synt_Sc"/>
    <property type="match status" value="1"/>
</dbReference>
<dbReference type="FunFam" id="3.30.470.20:FF:000015">
    <property type="entry name" value="Phosphoribosylaminoimidazole-succinocarboxamide synthase"/>
    <property type="match status" value="1"/>
</dbReference>
<dbReference type="Gene3D" id="3.30.470.20">
    <property type="entry name" value="ATP-grasp fold, B domain"/>
    <property type="match status" value="1"/>
</dbReference>
<dbReference type="Gene3D" id="3.30.200.20">
    <property type="entry name" value="Phosphorylase Kinase, domain 1"/>
    <property type="match status" value="1"/>
</dbReference>
<dbReference type="HAMAP" id="MF_00137">
    <property type="entry name" value="SAICAR_synth"/>
    <property type="match status" value="1"/>
</dbReference>
<dbReference type="InterPro" id="IPR028923">
    <property type="entry name" value="SAICAR_synt/ADE2_N"/>
</dbReference>
<dbReference type="InterPro" id="IPR001636">
    <property type="entry name" value="SAICAR_synth"/>
</dbReference>
<dbReference type="InterPro" id="IPR018236">
    <property type="entry name" value="SAICAR_synthetase_CS"/>
</dbReference>
<dbReference type="NCBIfam" id="NF010568">
    <property type="entry name" value="PRK13961.1"/>
    <property type="match status" value="1"/>
</dbReference>
<dbReference type="NCBIfam" id="TIGR00081">
    <property type="entry name" value="purC"/>
    <property type="match status" value="1"/>
</dbReference>
<dbReference type="PANTHER" id="PTHR43700">
    <property type="entry name" value="PHOSPHORIBOSYLAMINOIMIDAZOLE-SUCCINOCARBOXAMIDE SYNTHASE"/>
    <property type="match status" value="1"/>
</dbReference>
<dbReference type="PANTHER" id="PTHR43700:SF1">
    <property type="entry name" value="PHOSPHORIBOSYLAMINOIMIDAZOLE-SUCCINOCARBOXAMIDE SYNTHASE"/>
    <property type="match status" value="1"/>
</dbReference>
<dbReference type="Pfam" id="PF01259">
    <property type="entry name" value="SAICAR_synt"/>
    <property type="match status" value="1"/>
</dbReference>
<dbReference type="SUPFAM" id="SSF56104">
    <property type="entry name" value="SAICAR synthase-like"/>
    <property type="match status" value="1"/>
</dbReference>
<dbReference type="PROSITE" id="PS01057">
    <property type="entry name" value="SAICAR_SYNTHETASE_1"/>
    <property type="match status" value="1"/>
</dbReference>
<dbReference type="PROSITE" id="PS01058">
    <property type="entry name" value="SAICAR_SYNTHETASE_2"/>
    <property type="match status" value="1"/>
</dbReference>
<comment type="catalytic activity">
    <reaction evidence="1">
        <text>5-amino-1-(5-phospho-D-ribosyl)imidazole-4-carboxylate + L-aspartate + ATP = (2S)-2-[5-amino-1-(5-phospho-beta-D-ribosyl)imidazole-4-carboxamido]succinate + ADP + phosphate + 2 H(+)</text>
        <dbReference type="Rhea" id="RHEA:22628"/>
        <dbReference type="ChEBI" id="CHEBI:15378"/>
        <dbReference type="ChEBI" id="CHEBI:29991"/>
        <dbReference type="ChEBI" id="CHEBI:30616"/>
        <dbReference type="ChEBI" id="CHEBI:43474"/>
        <dbReference type="ChEBI" id="CHEBI:58443"/>
        <dbReference type="ChEBI" id="CHEBI:77657"/>
        <dbReference type="ChEBI" id="CHEBI:456216"/>
        <dbReference type="EC" id="6.3.2.6"/>
    </reaction>
</comment>
<comment type="pathway">
    <text evidence="1">Purine metabolism; IMP biosynthesis via de novo pathway; 5-amino-1-(5-phospho-D-ribosyl)imidazole-4-carboxamide from 5-amino-1-(5-phospho-D-ribosyl)imidazole-4-carboxylate: step 1/2.</text>
</comment>
<comment type="similarity">
    <text evidence="1">Belongs to the SAICAR synthetase family.</text>
</comment>
<organism>
    <name type="scientific">Cupriavidus pinatubonensis (strain JMP 134 / LMG 1197)</name>
    <name type="common">Cupriavidus necator (strain JMP 134)</name>
    <dbReference type="NCBI Taxonomy" id="264198"/>
    <lineage>
        <taxon>Bacteria</taxon>
        <taxon>Pseudomonadati</taxon>
        <taxon>Pseudomonadota</taxon>
        <taxon>Betaproteobacteria</taxon>
        <taxon>Burkholderiales</taxon>
        <taxon>Burkholderiaceae</taxon>
        <taxon>Cupriavidus</taxon>
    </lineage>
</organism>
<gene>
    <name evidence="1" type="primary">purC</name>
    <name type="ordered locus">Reut_A0556</name>
</gene>
<sequence>MSNALYQSSISSLPLLGHGKVRDNYAVGEDKLLIVTTDRLSAFDVIMGEPIPDKGRVLNQMANFWFRKLAHIVPNHETGVAAETVVAPAEVEQVKGRAVVVKRLKPILVEAVVRGYLAGSGWKDYQATGKVCGIELPAGLQNAQKLPEPIFTPAAKAEMGEHDENISFGEVEERIGIALARQMRDISIRLYKEAAEFAATRGIIIADTKFEFGLDENGTLTLMDEVLTADSSRFWPADSYQVGTNPPSFDKQFVRDWLEAVRIDGKPWPKTAPAPKLPDDVIEKTAAKYREALTRLTGEELQ</sequence>
<proteinExistence type="inferred from homology"/>
<evidence type="ECO:0000255" key="1">
    <source>
        <dbReference type="HAMAP-Rule" id="MF_00137"/>
    </source>
</evidence>
<accession>Q475J5</accession>
<feature type="chain" id="PRO_1000018766" description="Phosphoribosylaminoimidazole-succinocarboxamide synthase">
    <location>
        <begin position="1"/>
        <end position="302"/>
    </location>
</feature>
<protein>
    <recommendedName>
        <fullName evidence="1">Phosphoribosylaminoimidazole-succinocarboxamide synthase</fullName>
        <ecNumber evidence="1">6.3.2.6</ecNumber>
    </recommendedName>
    <alternativeName>
        <fullName evidence="1">SAICAR synthetase</fullName>
    </alternativeName>
</protein>
<keyword id="KW-0067">ATP-binding</keyword>
<keyword id="KW-0436">Ligase</keyword>
<keyword id="KW-0547">Nucleotide-binding</keyword>
<keyword id="KW-0658">Purine biosynthesis</keyword>
<reference key="1">
    <citation type="journal article" date="2010" name="PLoS ONE">
        <title>The complete multipartite genome sequence of Cupriavidus necator JMP134, a versatile pollutant degrader.</title>
        <authorList>
            <person name="Lykidis A."/>
            <person name="Perez-Pantoja D."/>
            <person name="Ledger T."/>
            <person name="Mavromatis K."/>
            <person name="Anderson I.J."/>
            <person name="Ivanova N.N."/>
            <person name="Hooper S.D."/>
            <person name="Lapidus A."/>
            <person name="Lucas S."/>
            <person name="Gonzalez B."/>
            <person name="Kyrpides N.C."/>
        </authorList>
    </citation>
    <scope>NUCLEOTIDE SEQUENCE [LARGE SCALE GENOMIC DNA]</scope>
    <source>
        <strain>JMP134 / LMG 1197</strain>
    </source>
</reference>
<name>PUR7_CUPPJ</name>